<sequence length="630" mass="68647">MTDTNHSSMRQHSLQSLAIAAIGVVFGDIGTSPLYSLKEAFSPAHGIPLTPSAILGVISLLFWAIILVVGIKYVLFVMRADNNGEGGVLALMALSLRPLNPKSRITGLMMALGIFGACMFYGDAVITPAISVMSAVEGLEVATPQLSHLVLPITIVILIALFWIQRHGTATVGKLFGPIMLLWFVTIAALGIYHIARAPMIVSAINPYYAFSFMSEHVLLAYVVLGSVVLVLTGAEALYADMGHFGAKPIRLAAYVLVMPSLVLNYFGQGALLLLDPKAIENPFFLLAPQWAALPLVVLSTVATVIASQAVISGAYSLTSQAIQLGYVPRMKILHTSELAIGQIYVPVVNWLLLFVILCIVIGFKSSDNLAAAYGIAVTATMVITTILAAVVMVKVWNWNKLLVAMIIGVFLVIDLGFFGANLLKVEQGGWLPLGIGALLFFLLMTWYKGRHIVKERTAADGIPLAPFLQGLLAHPPHRVSGTAIYLTGNDTLVPVSLLHNLKHNKVLHERTIFMTFVTRDIPYVKDHERVTVHDAGEGLYIVKAEYGFNETPDVKAVLEEVARQRGMTFELMDTSFFLARETVVPTHLPGMSIWRERVFAWMHQNAAKPTDFFAIPANRVVELGTKIEI</sequence>
<keyword id="KW-0997">Cell inner membrane</keyword>
<keyword id="KW-1003">Cell membrane</keyword>
<keyword id="KW-0406">Ion transport</keyword>
<keyword id="KW-0472">Membrane</keyword>
<keyword id="KW-0630">Potassium</keyword>
<keyword id="KW-0633">Potassium transport</keyword>
<keyword id="KW-0769">Symport</keyword>
<keyword id="KW-0812">Transmembrane</keyword>
<keyword id="KW-1133">Transmembrane helix</keyword>
<keyword id="KW-0813">Transport</keyword>
<dbReference type="EMBL" id="CP000526">
    <property type="protein sequence ID" value="ABM50251.1"/>
    <property type="molecule type" value="Genomic_DNA"/>
</dbReference>
<dbReference type="RefSeq" id="WP_004191791.1">
    <property type="nucleotide sequence ID" value="NC_008785.1"/>
</dbReference>
<dbReference type="KEGG" id="bmv:BMASAVP1_A1820"/>
<dbReference type="HOGENOM" id="CLU_008142_4_2_4"/>
<dbReference type="GO" id="GO:0005886">
    <property type="term" value="C:plasma membrane"/>
    <property type="evidence" value="ECO:0007669"/>
    <property type="project" value="UniProtKB-SubCell"/>
</dbReference>
<dbReference type="GO" id="GO:0015079">
    <property type="term" value="F:potassium ion transmembrane transporter activity"/>
    <property type="evidence" value="ECO:0007669"/>
    <property type="project" value="UniProtKB-UniRule"/>
</dbReference>
<dbReference type="GO" id="GO:0015293">
    <property type="term" value="F:symporter activity"/>
    <property type="evidence" value="ECO:0007669"/>
    <property type="project" value="UniProtKB-UniRule"/>
</dbReference>
<dbReference type="HAMAP" id="MF_01522">
    <property type="entry name" value="Kup"/>
    <property type="match status" value="1"/>
</dbReference>
<dbReference type="InterPro" id="IPR003855">
    <property type="entry name" value="K+_transporter"/>
</dbReference>
<dbReference type="InterPro" id="IPR053952">
    <property type="entry name" value="K_trans_C"/>
</dbReference>
<dbReference type="InterPro" id="IPR053951">
    <property type="entry name" value="K_trans_N"/>
</dbReference>
<dbReference type="InterPro" id="IPR023051">
    <property type="entry name" value="Kup"/>
</dbReference>
<dbReference type="PANTHER" id="PTHR30540:SF79">
    <property type="entry name" value="LOW AFFINITY POTASSIUM TRANSPORT SYSTEM PROTEIN KUP"/>
    <property type="match status" value="1"/>
</dbReference>
<dbReference type="PANTHER" id="PTHR30540">
    <property type="entry name" value="OSMOTIC STRESS POTASSIUM TRANSPORTER"/>
    <property type="match status" value="1"/>
</dbReference>
<dbReference type="Pfam" id="PF02705">
    <property type="entry name" value="K_trans"/>
    <property type="match status" value="1"/>
</dbReference>
<dbReference type="Pfam" id="PF22776">
    <property type="entry name" value="K_trans_C"/>
    <property type="match status" value="1"/>
</dbReference>
<name>KUP_BURMS</name>
<feature type="chain" id="PRO_1000068642" description="Probable potassium transport system protein Kup">
    <location>
        <begin position="1"/>
        <end position="630"/>
    </location>
</feature>
<feature type="transmembrane region" description="Helical" evidence="1">
    <location>
        <begin position="17"/>
        <end position="37"/>
    </location>
</feature>
<feature type="transmembrane region" description="Helical" evidence="1">
    <location>
        <begin position="51"/>
        <end position="71"/>
    </location>
</feature>
<feature type="transmembrane region" description="Helical" evidence="1">
    <location>
        <begin position="105"/>
        <end position="125"/>
    </location>
</feature>
<feature type="transmembrane region" description="Helical" evidence="1">
    <location>
        <begin position="144"/>
        <end position="164"/>
    </location>
</feature>
<feature type="transmembrane region" description="Helical" evidence="1">
    <location>
        <begin position="175"/>
        <end position="195"/>
    </location>
</feature>
<feature type="transmembrane region" description="Helical" evidence="1">
    <location>
        <begin position="218"/>
        <end position="238"/>
    </location>
</feature>
<feature type="transmembrane region" description="Helical" evidence="1">
    <location>
        <begin position="255"/>
        <end position="275"/>
    </location>
</feature>
<feature type="transmembrane region" description="Helical" evidence="1">
    <location>
        <begin position="283"/>
        <end position="303"/>
    </location>
</feature>
<feature type="transmembrane region" description="Helical" evidence="1">
    <location>
        <begin position="344"/>
        <end position="364"/>
    </location>
</feature>
<feature type="transmembrane region" description="Helical" evidence="1">
    <location>
        <begin position="374"/>
        <end position="394"/>
    </location>
</feature>
<feature type="transmembrane region" description="Helical" evidence="1">
    <location>
        <begin position="402"/>
        <end position="422"/>
    </location>
</feature>
<feature type="transmembrane region" description="Helical" evidence="1">
    <location>
        <begin position="428"/>
        <end position="448"/>
    </location>
</feature>
<organism>
    <name type="scientific">Burkholderia mallei (strain SAVP1)</name>
    <dbReference type="NCBI Taxonomy" id="320388"/>
    <lineage>
        <taxon>Bacteria</taxon>
        <taxon>Pseudomonadati</taxon>
        <taxon>Pseudomonadota</taxon>
        <taxon>Betaproteobacteria</taxon>
        <taxon>Burkholderiales</taxon>
        <taxon>Burkholderiaceae</taxon>
        <taxon>Burkholderia</taxon>
        <taxon>pseudomallei group</taxon>
    </lineage>
</organism>
<comment type="function">
    <text evidence="1">Transport of potassium into the cell. Likely operates as a K(+):H(+) symporter.</text>
</comment>
<comment type="catalytic activity">
    <reaction evidence="1">
        <text>K(+)(in) + H(+)(in) = K(+)(out) + H(+)(out)</text>
        <dbReference type="Rhea" id="RHEA:28490"/>
        <dbReference type="ChEBI" id="CHEBI:15378"/>
        <dbReference type="ChEBI" id="CHEBI:29103"/>
    </reaction>
    <physiologicalReaction direction="right-to-left" evidence="1">
        <dbReference type="Rhea" id="RHEA:28492"/>
    </physiologicalReaction>
</comment>
<comment type="subcellular location">
    <subcellularLocation>
        <location evidence="1">Cell inner membrane</location>
        <topology evidence="1">Multi-pass membrane protein</topology>
    </subcellularLocation>
</comment>
<comment type="similarity">
    <text evidence="1">Belongs to the HAK/KUP transporter (TC 2.A.72) family.</text>
</comment>
<protein>
    <recommendedName>
        <fullName evidence="1">Probable potassium transport system protein Kup</fullName>
    </recommendedName>
</protein>
<accession>A1V4I6</accession>
<gene>
    <name evidence="1" type="primary">kup</name>
    <name type="ordered locus">BMASAVP1_A1820</name>
</gene>
<evidence type="ECO:0000255" key="1">
    <source>
        <dbReference type="HAMAP-Rule" id="MF_01522"/>
    </source>
</evidence>
<reference key="1">
    <citation type="journal article" date="2010" name="Genome Biol. Evol.">
        <title>Continuing evolution of Burkholderia mallei through genome reduction and large-scale rearrangements.</title>
        <authorList>
            <person name="Losada L."/>
            <person name="Ronning C.M."/>
            <person name="DeShazer D."/>
            <person name="Woods D."/>
            <person name="Fedorova N."/>
            <person name="Kim H.S."/>
            <person name="Shabalina S.A."/>
            <person name="Pearson T.R."/>
            <person name="Brinkac L."/>
            <person name="Tan P."/>
            <person name="Nandi T."/>
            <person name="Crabtree J."/>
            <person name="Badger J."/>
            <person name="Beckstrom-Sternberg S."/>
            <person name="Saqib M."/>
            <person name="Schutzer S.E."/>
            <person name="Keim P."/>
            <person name="Nierman W.C."/>
        </authorList>
    </citation>
    <scope>NUCLEOTIDE SEQUENCE [LARGE SCALE GENOMIC DNA]</scope>
    <source>
        <strain>SAVP1</strain>
    </source>
</reference>
<proteinExistence type="inferred from homology"/>